<dbReference type="PDB" id="2BTV">
    <property type="method" value="X-ray"/>
    <property type="resolution" value="3.50 A"/>
    <property type="chains" value="A/B=1-901"/>
</dbReference>
<dbReference type="PDB" id="8W12">
    <property type="method" value="EM"/>
    <property type="resolution" value="3.50 A"/>
    <property type="chains" value="A/B/D/E=1-901"/>
</dbReference>
<dbReference type="PDB" id="8W19">
    <property type="method" value="EM"/>
    <property type="resolution" value="4.40 A"/>
    <property type="chains" value="A/B/D/E/F/G/H/I/J/K=1-901"/>
</dbReference>
<dbReference type="PDB" id="8W1C">
    <property type="method" value="EM"/>
    <property type="resolution" value="3.60 A"/>
    <property type="chains" value="A/B/D/E/F/G/H/I/J/K=1-901"/>
</dbReference>
<dbReference type="PDB" id="8W1I">
    <property type="method" value="EM"/>
    <property type="resolution" value="6.50 A"/>
    <property type="chains" value="A/B/D/E/F/G/H/I/J/K=1-901"/>
</dbReference>
<dbReference type="PDB" id="8W1O">
    <property type="method" value="EM"/>
    <property type="resolution" value="2.80 A"/>
    <property type="chains" value="A/B/C/D/E/F/G/H/I/J=1-901"/>
</dbReference>
<dbReference type="PDB" id="8W1R">
    <property type="method" value="EM"/>
    <property type="resolution" value="3.30 A"/>
    <property type="chains" value="A/B/C/D/E/F/G/H/I/J=1-901"/>
</dbReference>
<dbReference type="PDB" id="8W1S">
    <property type="method" value="EM"/>
    <property type="resolution" value="3.10 A"/>
    <property type="chains" value="A/B/C/D/E/F/G/H/I/J=1-901"/>
</dbReference>
<dbReference type="PDBsum" id="2BTV"/>
<dbReference type="PDBsum" id="8W12"/>
<dbReference type="PDBsum" id="8W19"/>
<dbReference type="PDBsum" id="8W1C"/>
<dbReference type="PDBsum" id="8W1I"/>
<dbReference type="PDBsum" id="8W1O"/>
<dbReference type="PDBsum" id="8W1R"/>
<dbReference type="PDBsum" id="8W1S"/>
<dbReference type="SMR" id="P56582"/>
<dbReference type="DIP" id="DIP-59519N"/>
<dbReference type="IntAct" id="P56582">
    <property type="interactions" value="2"/>
</dbReference>
<dbReference type="EvolutionaryTrace" id="P56582"/>
<dbReference type="GO" id="GO:0044423">
    <property type="term" value="C:virion component"/>
    <property type="evidence" value="ECO:0007669"/>
    <property type="project" value="UniProtKB-KW"/>
</dbReference>
<dbReference type="GO" id="GO:0005198">
    <property type="term" value="F:structural molecule activity"/>
    <property type="evidence" value="ECO:0007669"/>
    <property type="project" value="InterPro"/>
</dbReference>
<dbReference type="InterPro" id="IPR002614">
    <property type="entry name" value="Inner_layer_core_VP3_Orbivir"/>
</dbReference>
<dbReference type="InterPro" id="IPR016029">
    <property type="entry name" value="Inner_layer_core_VP3_Reovir"/>
</dbReference>
<dbReference type="Pfam" id="PF01700">
    <property type="entry name" value="Orbi_VP3"/>
    <property type="match status" value="1"/>
</dbReference>
<dbReference type="SUPFAM" id="SSF56831">
    <property type="entry name" value="Reovirus inner layer core protein p3"/>
    <property type="match status" value="1"/>
</dbReference>
<organism>
    <name type="scientific">Bluetongue virus 1 (isolate South Africa)</name>
    <name type="common">BTV 1</name>
    <dbReference type="NCBI Taxonomy" id="10905"/>
    <lineage>
        <taxon>Viruses</taxon>
        <taxon>Riboviria</taxon>
        <taxon>Orthornavirae</taxon>
        <taxon>Duplornaviricota</taxon>
        <taxon>Resentoviricetes</taxon>
        <taxon>Reovirales</taxon>
        <taxon>Sedoreoviridae</taxon>
        <taxon>Orbivirus</taxon>
        <taxon>Bluetongue virus</taxon>
    </lineage>
</organism>
<reference key="1">
    <citation type="journal article" date="1998" name="Nature">
        <title>The atomic structure of the bluetongue virus core.</title>
        <authorList>
            <person name="Grimes J.M."/>
            <person name="Burroughs J.N."/>
            <person name="Gouet P."/>
            <person name="Diprose J.M."/>
            <person name="Malby R."/>
            <person name="Zientara S."/>
            <person name="Mertens P.P."/>
            <person name="Stuart D.I."/>
        </authorList>
    </citation>
    <scope>X-RAY CRYSTALLOGRAPHY (3.5 ANGSTROMS)</scope>
</reference>
<organismHost>
    <name type="scientific">Antilocapra americana</name>
    <name type="common">Pronghorn</name>
    <dbReference type="NCBI Taxonomy" id="9891"/>
</organismHost>
<organismHost>
    <name type="scientific">Bos taurus</name>
    <name type="common">Bovine</name>
    <dbReference type="NCBI Taxonomy" id="9913"/>
</organismHost>
<organismHost>
    <name type="scientific">Capra hircus</name>
    <name type="common">Goat</name>
    <dbReference type="NCBI Taxonomy" id="9925"/>
</organismHost>
<organismHost>
    <name type="scientific">Culicoides variipennis</name>
    <name type="common">Biting midge</name>
    <dbReference type="NCBI Taxonomy" id="46212"/>
</organismHost>
<organismHost>
    <name type="scientific">Ovis aries</name>
    <name type="common">Sheep</name>
    <dbReference type="NCBI Taxonomy" id="9940"/>
</organismHost>
<gene>
    <name type="primary">Segment-3</name>
    <name type="synonym">L3</name>
</gene>
<sequence>MAAQNEQRPERIKTTPYLEGDVLSSDSGPLLSVFALQEIMQKVRQVQADYMTATREVDFTVPDVQQILDDIKALAAAQVYKIVKVPSTSFRHIVTQSRDRVLRVDTYYEEMSQVGDVITEDEPEKFYSTIIKKVRFIRGKGSFILHDIPARDHRGMEVAEPEVLGVEFKNVLPVLTAEHRAMIQNALDGSIIENGNVATRDVDVFIGACSEPFYRIYNRFQGYIEAVQLQELRNSIGWLERLGQRKRITYSQEVLTDFRRQDMIWVLALQLPVNPQVVWDVPRSSIANLIMNIATCLPTGEYIAPNPRISSITLTQRITTTGPFAILTGSTPTAQQLNDVRKIYLALMFPGQIILDLKIDPGERMDPAVRMVAGVVGHLLFTAGGRFTNLTQNMARQLDIALNDYLLYMYNTRVQVNYGPTGEPLDFQIGRNQYDCNVFRADFATGTGYNGWATIDVEYRDPAPYVHAQRYIRYCGIDSRELINPTTYGIGMTYHCYNEMLRMLVAAGKDSEAAYFRSMLPFHMVRFARINQIINEDLHSVFSLPDDMFNALLPDLIAGAHQNADPVVLDVSWISLWFAFNRSFEPTHRNEMLEIAPLIESVYASELSVMKVDMRHLSLMQRRFPDVLIQARPSHFWKAVLNDSPEAVKAVMNLSHSHNFINIRDMMRWVLLPSLQPSLKLVLEEEAWAAANDFEDLMLTDQVYMHRDMLPEPRLDDIERFRQEGFYYTNMLEAPPEIDRVVQYTYEIARLQANMGQFRAALRRIMDDDDWIGFGGVLRTVRVKFFDARPPDDILQGLPFSYDTNEKGGLSYATIKYATETTIFYLIYNVEFSNTPDSLVLINPTYTMTKVFINKRIVERVRVGQILAVLNRRFVAYKGKMRIMDITQSLKMGTKLAAPTV</sequence>
<comment type="function">
    <text>The VP3 protein is one of the five proteins (with VP1, VP4, VP6 and VP7) which form the inner capsid of the virus.</text>
</comment>
<comment type="subcellular location">
    <subcellularLocation>
        <location evidence="1">Virion</location>
    </subcellularLocation>
</comment>
<comment type="similarity">
    <text evidence="1">Belongs to the orbivirus VP3 family.</text>
</comment>
<comment type="online information" name="Virus Particle ExploreR db">
    <link uri="https://viperdb.org/Info_Page.php?VDB=2btv"/>
    <text>Icosahedral capsid structure</text>
</comment>
<proteinExistence type="evidence at protein level"/>
<evidence type="ECO:0000305" key="1"/>
<evidence type="ECO:0007829" key="2">
    <source>
        <dbReference type="PDB" id="2BTV"/>
    </source>
</evidence>
<evidence type="ECO:0007829" key="3">
    <source>
        <dbReference type="PDB" id="8W12"/>
    </source>
</evidence>
<evidence type="ECO:0007829" key="4">
    <source>
        <dbReference type="PDB" id="8W1O"/>
    </source>
</evidence>
<evidence type="ECO:0007829" key="5">
    <source>
        <dbReference type="PDB" id="8W1R"/>
    </source>
</evidence>
<evidence type="ECO:0007829" key="6">
    <source>
        <dbReference type="PDB" id="8W1S"/>
    </source>
</evidence>
<keyword id="KW-0002">3D-structure</keyword>
<keyword id="KW-0946">Virion</keyword>
<name>VP3_BTV1S</name>
<protein>
    <recommendedName>
        <fullName>Core protein VP3</fullName>
    </recommendedName>
    <alternativeName>
        <fullName>Major inner capsid protein</fullName>
    </alternativeName>
</protein>
<feature type="chain" id="PRO_0000222693" description="Core protein VP3">
    <location>
        <begin position="1"/>
        <end position="901"/>
    </location>
</feature>
<feature type="helix" evidence="4">
    <location>
        <begin position="9"/>
        <end position="11"/>
    </location>
</feature>
<feature type="helix" evidence="4">
    <location>
        <begin position="16"/>
        <end position="18"/>
    </location>
</feature>
<feature type="strand" evidence="4">
    <location>
        <begin position="22"/>
        <end position="26"/>
    </location>
</feature>
<feature type="helix" evidence="6">
    <location>
        <begin position="28"/>
        <end position="34"/>
    </location>
</feature>
<feature type="helix" evidence="4">
    <location>
        <begin position="37"/>
        <end position="52"/>
    </location>
</feature>
<feature type="helix" evidence="4">
    <location>
        <begin position="64"/>
        <end position="74"/>
    </location>
</feature>
<feature type="strand" evidence="4">
    <location>
        <begin position="81"/>
        <end position="85"/>
    </location>
</feature>
<feature type="strand" evidence="4">
    <location>
        <begin position="90"/>
        <end position="93"/>
    </location>
</feature>
<feature type="strand" evidence="4">
    <location>
        <begin position="98"/>
        <end position="105"/>
    </location>
</feature>
<feature type="helix" evidence="4">
    <location>
        <begin position="106"/>
        <end position="111"/>
    </location>
</feature>
<feature type="strand" evidence="2">
    <location>
        <begin position="113"/>
        <end position="115"/>
    </location>
</feature>
<feature type="helix" evidence="4">
    <location>
        <begin position="123"/>
        <end position="140"/>
    </location>
</feature>
<feature type="strand" evidence="4">
    <location>
        <begin position="143"/>
        <end position="147"/>
    </location>
</feature>
<feature type="strand" evidence="4">
    <location>
        <begin position="150"/>
        <end position="153"/>
    </location>
</feature>
<feature type="strand" evidence="4">
    <location>
        <begin position="156"/>
        <end position="159"/>
    </location>
</feature>
<feature type="helix" evidence="4">
    <location>
        <begin position="161"/>
        <end position="163"/>
    </location>
</feature>
<feature type="strand" evidence="4">
    <location>
        <begin position="164"/>
        <end position="166"/>
    </location>
</feature>
<feature type="turn" evidence="4">
    <location>
        <begin position="169"/>
        <end position="171"/>
    </location>
</feature>
<feature type="helix" evidence="4">
    <location>
        <begin position="172"/>
        <end position="174"/>
    </location>
</feature>
<feature type="helix" evidence="4">
    <location>
        <begin position="177"/>
        <end position="187"/>
    </location>
</feature>
<feature type="strand" evidence="4">
    <location>
        <begin position="193"/>
        <end position="199"/>
    </location>
</feature>
<feature type="strand" evidence="4">
    <location>
        <begin position="201"/>
        <end position="207"/>
    </location>
</feature>
<feature type="helix" evidence="4">
    <location>
        <begin position="211"/>
        <end position="229"/>
    </location>
</feature>
<feature type="helix" evidence="4">
    <location>
        <begin position="231"/>
        <end position="246"/>
    </location>
</feature>
<feature type="strand" evidence="4">
    <location>
        <begin position="248"/>
        <end position="250"/>
    </location>
</feature>
<feature type="helix" evidence="4">
    <location>
        <begin position="253"/>
        <end position="255"/>
    </location>
</feature>
<feature type="helix" evidence="4">
    <location>
        <begin position="260"/>
        <end position="262"/>
    </location>
</feature>
<feature type="strand" evidence="4">
    <location>
        <begin position="263"/>
        <end position="266"/>
    </location>
</feature>
<feature type="helix" evidence="4">
    <location>
        <begin position="275"/>
        <end position="279"/>
    </location>
</feature>
<feature type="turn" evidence="2">
    <location>
        <begin position="282"/>
        <end position="284"/>
    </location>
</feature>
<feature type="helix" evidence="4">
    <location>
        <begin position="285"/>
        <end position="296"/>
    </location>
</feature>
<feature type="strand" evidence="4">
    <location>
        <begin position="299"/>
        <end position="303"/>
    </location>
</feature>
<feature type="helix" evidence="4">
    <location>
        <begin position="308"/>
        <end position="313"/>
    </location>
</feature>
<feature type="strand" evidence="4">
    <location>
        <begin position="316"/>
        <end position="320"/>
    </location>
</feature>
<feature type="helix" evidence="4">
    <location>
        <begin position="323"/>
        <end position="327"/>
    </location>
</feature>
<feature type="helix" evidence="4">
    <location>
        <begin position="334"/>
        <end position="348"/>
    </location>
</feature>
<feature type="turn" evidence="4">
    <location>
        <begin position="350"/>
        <end position="352"/>
    </location>
</feature>
<feature type="strand" evidence="4">
    <location>
        <begin position="353"/>
        <end position="357"/>
    </location>
</feature>
<feature type="turn" evidence="5">
    <location>
        <begin position="361"/>
        <end position="365"/>
    </location>
</feature>
<feature type="helix" evidence="4">
    <location>
        <begin position="367"/>
        <end position="380"/>
    </location>
</feature>
<feature type="strand" evidence="4">
    <location>
        <begin position="387"/>
        <end position="390"/>
    </location>
</feature>
<feature type="helix" evidence="4">
    <location>
        <begin position="392"/>
        <end position="406"/>
    </location>
</feature>
<feature type="strand" evidence="6">
    <location>
        <begin position="412"/>
        <end position="414"/>
    </location>
</feature>
<feature type="strand" evidence="4">
    <location>
        <begin position="416"/>
        <end position="418"/>
    </location>
</feature>
<feature type="strand" evidence="3">
    <location>
        <begin position="423"/>
        <end position="425"/>
    </location>
</feature>
<feature type="strand" evidence="4">
    <location>
        <begin position="427"/>
        <end position="429"/>
    </location>
</feature>
<feature type="turn" evidence="4">
    <location>
        <begin position="430"/>
        <end position="433"/>
    </location>
</feature>
<feature type="helix" evidence="4">
    <location>
        <begin position="437"/>
        <end position="439"/>
    </location>
</feature>
<feature type="turn" evidence="4">
    <location>
        <begin position="443"/>
        <end position="445"/>
    </location>
</feature>
<feature type="turn" evidence="4">
    <location>
        <begin position="450"/>
        <end position="453"/>
    </location>
</feature>
<feature type="strand" evidence="4">
    <location>
        <begin position="457"/>
        <end position="459"/>
    </location>
</feature>
<feature type="strand" evidence="5">
    <location>
        <begin position="464"/>
        <end position="467"/>
    </location>
</feature>
<feature type="strand" evidence="4">
    <location>
        <begin position="470"/>
        <end position="472"/>
    </location>
</feature>
<feature type="helix" evidence="4">
    <location>
        <begin position="474"/>
        <end position="476"/>
    </location>
</feature>
<feature type="strand" evidence="3">
    <location>
        <begin position="479"/>
        <end position="481"/>
    </location>
</feature>
<feature type="turn" evidence="4">
    <location>
        <begin position="485"/>
        <end position="491"/>
    </location>
</feature>
<feature type="helix" evidence="4">
    <location>
        <begin position="495"/>
        <end position="506"/>
    </location>
</feature>
<feature type="helix" evidence="4">
    <location>
        <begin position="510"/>
        <end position="518"/>
    </location>
</feature>
<feature type="helix" evidence="4">
    <location>
        <begin position="520"/>
        <end position="536"/>
    </location>
</feature>
<feature type="helix" evidence="4">
    <location>
        <begin position="546"/>
        <end position="549"/>
    </location>
</feature>
<feature type="helix" evidence="4">
    <location>
        <begin position="552"/>
        <end position="558"/>
    </location>
</feature>
<feature type="strand" evidence="4">
    <location>
        <begin position="567"/>
        <end position="571"/>
    </location>
</feature>
<feature type="helix" evidence="4">
    <location>
        <begin position="574"/>
        <end position="580"/>
    </location>
</feature>
<feature type="strand" evidence="4">
    <location>
        <begin position="583"/>
        <end position="588"/>
    </location>
</feature>
<feature type="turn" evidence="4">
    <location>
        <begin position="591"/>
        <end position="595"/>
    </location>
</feature>
<feature type="helix" evidence="4">
    <location>
        <begin position="596"/>
        <end position="617"/>
    </location>
</feature>
<feature type="helix" evidence="4">
    <location>
        <begin position="620"/>
        <end position="623"/>
    </location>
</feature>
<feature type="turn" evidence="4">
    <location>
        <begin position="625"/>
        <end position="627"/>
    </location>
</feature>
<feature type="helix" evidence="4">
    <location>
        <begin position="633"/>
        <end position="642"/>
    </location>
</feature>
<feature type="helix" evidence="4">
    <location>
        <begin position="646"/>
        <end position="656"/>
    </location>
</feature>
<feature type="helix" evidence="4">
    <location>
        <begin position="663"/>
        <end position="671"/>
    </location>
</feature>
<feature type="helix" evidence="4">
    <location>
        <begin position="679"/>
        <end position="690"/>
    </location>
</feature>
<feature type="turn" evidence="4">
    <location>
        <begin position="694"/>
        <end position="698"/>
    </location>
</feature>
<feature type="strand" evidence="6">
    <location>
        <begin position="699"/>
        <end position="701"/>
    </location>
</feature>
<feature type="strand" evidence="4">
    <location>
        <begin position="703"/>
        <end position="705"/>
    </location>
</feature>
<feature type="helix" evidence="4">
    <location>
        <begin position="718"/>
        <end position="723"/>
    </location>
</feature>
<feature type="strand" evidence="4">
    <location>
        <begin position="727"/>
        <end position="729"/>
    </location>
</feature>
<feature type="strand" evidence="2">
    <location>
        <begin position="732"/>
        <end position="734"/>
    </location>
</feature>
<feature type="helix" evidence="4">
    <location>
        <begin position="738"/>
        <end position="740"/>
    </location>
</feature>
<feature type="strand" evidence="4">
    <location>
        <begin position="741"/>
        <end position="744"/>
    </location>
</feature>
<feature type="helix" evidence="4">
    <location>
        <begin position="746"/>
        <end position="754"/>
    </location>
</feature>
<feature type="helix" evidence="4">
    <location>
        <begin position="758"/>
        <end position="767"/>
    </location>
</feature>
<feature type="strand" evidence="4">
    <location>
        <begin position="771"/>
        <end position="774"/>
    </location>
</feature>
<feature type="strand" evidence="4">
    <location>
        <begin position="779"/>
        <end position="788"/>
    </location>
</feature>
<feature type="helix" evidence="4">
    <location>
        <begin position="792"/>
        <end position="796"/>
    </location>
</feature>
<feature type="strand" evidence="4">
    <location>
        <begin position="799"/>
        <end position="807"/>
    </location>
</feature>
<feature type="strand" evidence="4">
    <location>
        <begin position="810"/>
        <end position="817"/>
    </location>
</feature>
<feature type="strand" evidence="4">
    <location>
        <begin position="819"/>
        <end position="827"/>
    </location>
</feature>
<feature type="helix" evidence="3">
    <location>
        <begin position="830"/>
        <end position="834"/>
    </location>
</feature>
<feature type="helix" evidence="2">
    <location>
        <begin position="837"/>
        <end position="839"/>
    </location>
</feature>
<feature type="strand" evidence="2">
    <location>
        <begin position="846"/>
        <end position="852"/>
    </location>
</feature>
<feature type="strand" evidence="4">
    <location>
        <begin position="858"/>
        <end position="862"/>
    </location>
</feature>
<feature type="helix" evidence="4">
    <location>
        <begin position="863"/>
        <end position="869"/>
    </location>
</feature>
<feature type="strand" evidence="4">
    <location>
        <begin position="872"/>
        <end position="877"/>
    </location>
</feature>
<feature type="strand" evidence="4">
    <location>
        <begin position="881"/>
        <end position="885"/>
    </location>
</feature>
<feature type="helix" evidence="4">
    <location>
        <begin position="887"/>
        <end position="891"/>
    </location>
</feature>
<feature type="strand" evidence="4">
    <location>
        <begin position="893"/>
        <end position="895"/>
    </location>
</feature>
<accession>P56582</accession>